<sequence>MFYLSDIEEEASAGAEPTYNFWEVLLFSNTQENLVTVVGELHTLTDRVVHYKIEPESREVTATTLPSLLALLLEKRNQARRLYRDVLSMKMSELDWDIDDLFTQLQEELTRTDDTLSMYPRRRFYH</sequence>
<keyword id="KW-0963">Cytoplasm</keyword>
<keyword id="KW-1185">Reference proteome</keyword>
<keyword id="KW-0807">Transducer</keyword>
<name>GPG1_YEAST</name>
<protein>
    <recommendedName>
        <fullName>Heterotrimeric G protein gamma subunit GPG1</fullName>
    </recommendedName>
</protein>
<comment type="function">
    <text evidence="1">Gamma subunit of a guanine nucleotide-binding protein (G protein). G proteins are involved as modulators or transducers in various transmembrane signaling systems. The beta and gamma chains are required for the GTPase activity, for replacement of GDP by GTP, and for G protein-effector interaction. Involved in the determination of the cAMP level according to nutritional conditions, most probably as a regulator of cAMP phosphodiesterase. Required for the control of pseudohyphal and haploid invasive growth.</text>
</comment>
<comment type="subunit">
    <text evidence="1">G proteins are composed of 3 units, alpha, beta and gamma. GPG1 interacts with the beta subunits GBP1 and GPB2.</text>
</comment>
<comment type="subcellular location">
    <subcellularLocation>
        <location evidence="3">Cytoplasm</location>
    </subcellularLocation>
</comment>
<comment type="induction">
    <text evidence="2">By heat.</text>
</comment>
<dbReference type="EMBL" id="Z72643">
    <property type="protein sequence ID" value="CAA96829.1"/>
    <property type="molecule type" value="Genomic_DNA"/>
</dbReference>
<dbReference type="EMBL" id="BK006941">
    <property type="protein sequence ID" value="DAA07988.1"/>
    <property type="molecule type" value="Genomic_DNA"/>
</dbReference>
<dbReference type="PIR" id="S64131">
    <property type="entry name" value="S64131"/>
</dbReference>
<dbReference type="RefSeq" id="NP_011394.1">
    <property type="nucleotide sequence ID" value="NM_001180986.1"/>
</dbReference>
<dbReference type="SMR" id="P53130"/>
<dbReference type="BioGRID" id="33130">
    <property type="interactions" value="71"/>
</dbReference>
<dbReference type="DIP" id="DIP-6469N"/>
<dbReference type="FunCoup" id="P53130">
    <property type="interactions" value="165"/>
</dbReference>
<dbReference type="IntAct" id="P53130">
    <property type="interactions" value="5"/>
</dbReference>
<dbReference type="MINT" id="P53130"/>
<dbReference type="STRING" id="4932.YGL121C"/>
<dbReference type="iPTMnet" id="P53130"/>
<dbReference type="PaxDb" id="4932-YGL121C"/>
<dbReference type="PeptideAtlas" id="P53130"/>
<dbReference type="EnsemblFungi" id="YGL121C_mRNA">
    <property type="protein sequence ID" value="YGL121C"/>
    <property type="gene ID" value="YGL121C"/>
</dbReference>
<dbReference type="GeneID" id="852756"/>
<dbReference type="KEGG" id="sce:YGL121C"/>
<dbReference type="AGR" id="SGD:S000003089"/>
<dbReference type="SGD" id="S000003089">
    <property type="gene designation" value="GPG1"/>
</dbReference>
<dbReference type="VEuPathDB" id="FungiDB:YGL121C"/>
<dbReference type="eggNOG" id="ENOG502SAR2">
    <property type="taxonomic scope" value="Eukaryota"/>
</dbReference>
<dbReference type="HOGENOM" id="CLU_150807_0_0_1"/>
<dbReference type="InParanoid" id="P53130"/>
<dbReference type="OMA" id="ILMEATR"/>
<dbReference type="OrthoDB" id="4070070at2759"/>
<dbReference type="BioCyc" id="YEAST:G3O-30618-MONOMER"/>
<dbReference type="BioGRID-ORCS" id="852756">
    <property type="hits" value="0 hits in 10 CRISPR screens"/>
</dbReference>
<dbReference type="PRO" id="PR:P53130"/>
<dbReference type="Proteomes" id="UP000002311">
    <property type="component" value="Chromosome VII"/>
</dbReference>
<dbReference type="RNAct" id="P53130">
    <property type="molecule type" value="protein"/>
</dbReference>
<dbReference type="GO" id="GO:0005737">
    <property type="term" value="C:cytoplasm"/>
    <property type="evidence" value="ECO:0007669"/>
    <property type="project" value="UniProtKB-SubCell"/>
</dbReference>
<dbReference type="GO" id="GO:0001403">
    <property type="term" value="P:invasive growth in response to glucose limitation"/>
    <property type="evidence" value="ECO:0000315"/>
    <property type="project" value="SGD"/>
</dbReference>
<dbReference type="GO" id="GO:1905907">
    <property type="term" value="P:negative regulation of amyloid fibril formation"/>
    <property type="evidence" value="ECO:0000315"/>
    <property type="project" value="SGD"/>
</dbReference>
<dbReference type="GO" id="GO:0007165">
    <property type="term" value="P:signal transduction"/>
    <property type="evidence" value="ECO:0007669"/>
    <property type="project" value="UniProtKB-KW"/>
</dbReference>
<evidence type="ECO:0000269" key="1">
    <source>
    </source>
</evidence>
<evidence type="ECO:0000269" key="2">
    <source>
    </source>
</evidence>
<evidence type="ECO:0000305" key="3"/>
<gene>
    <name type="primary">GPG1</name>
    <name type="ordered locus">YGL121C</name>
</gene>
<reference key="1">
    <citation type="journal article" date="1997" name="Nature">
        <title>The nucleotide sequence of Saccharomyces cerevisiae chromosome VII.</title>
        <authorList>
            <person name="Tettelin H."/>
            <person name="Agostoni-Carbone M.L."/>
            <person name="Albermann K."/>
            <person name="Albers M."/>
            <person name="Arroyo J."/>
            <person name="Backes U."/>
            <person name="Barreiros T."/>
            <person name="Bertani I."/>
            <person name="Bjourson A.J."/>
            <person name="Brueckner M."/>
            <person name="Bruschi C.V."/>
            <person name="Carignani G."/>
            <person name="Castagnoli L."/>
            <person name="Cerdan E."/>
            <person name="Clemente M.L."/>
            <person name="Coblenz A."/>
            <person name="Coglievina M."/>
            <person name="Coissac E."/>
            <person name="Defoor E."/>
            <person name="Del Bino S."/>
            <person name="Delius H."/>
            <person name="Delneri D."/>
            <person name="de Wergifosse P."/>
            <person name="Dujon B."/>
            <person name="Durand P."/>
            <person name="Entian K.-D."/>
            <person name="Eraso P."/>
            <person name="Escribano V."/>
            <person name="Fabiani L."/>
            <person name="Fartmann B."/>
            <person name="Feroli F."/>
            <person name="Feuermann M."/>
            <person name="Frontali L."/>
            <person name="Garcia-Gonzalez M."/>
            <person name="Garcia-Saez M.I."/>
            <person name="Goffeau A."/>
            <person name="Guerreiro P."/>
            <person name="Hani J."/>
            <person name="Hansen M."/>
            <person name="Hebling U."/>
            <person name="Hernandez K."/>
            <person name="Heumann K."/>
            <person name="Hilger F."/>
            <person name="Hofmann B."/>
            <person name="Indge K.J."/>
            <person name="James C.M."/>
            <person name="Klima R."/>
            <person name="Koetter P."/>
            <person name="Kramer B."/>
            <person name="Kramer W."/>
            <person name="Lauquin G."/>
            <person name="Leuther H."/>
            <person name="Louis E.J."/>
            <person name="Maillier E."/>
            <person name="Marconi A."/>
            <person name="Martegani E."/>
            <person name="Mazon M.J."/>
            <person name="Mazzoni C."/>
            <person name="McReynolds A.D.K."/>
            <person name="Melchioretto P."/>
            <person name="Mewes H.-W."/>
            <person name="Minenkova O."/>
            <person name="Mueller-Auer S."/>
            <person name="Nawrocki A."/>
            <person name="Netter P."/>
            <person name="Neu R."/>
            <person name="Nombela C."/>
            <person name="Oliver S.G."/>
            <person name="Panzeri L."/>
            <person name="Paoluzi S."/>
            <person name="Plevani P."/>
            <person name="Portetelle D."/>
            <person name="Portillo F."/>
            <person name="Potier S."/>
            <person name="Purnelle B."/>
            <person name="Rieger M."/>
            <person name="Riles L."/>
            <person name="Rinaldi T."/>
            <person name="Robben J."/>
            <person name="Rodrigues-Pousada C."/>
            <person name="Rodriguez-Belmonte E."/>
            <person name="Rodriguez-Torres A.M."/>
            <person name="Rose M."/>
            <person name="Ruzzi M."/>
            <person name="Saliola M."/>
            <person name="Sanchez-Perez M."/>
            <person name="Schaefer B."/>
            <person name="Schaefer M."/>
            <person name="Scharfe M."/>
            <person name="Schmidheini T."/>
            <person name="Schreer A."/>
            <person name="Skala J."/>
            <person name="Souciet J.-L."/>
            <person name="Steensma H.Y."/>
            <person name="Talla E."/>
            <person name="Thierry A."/>
            <person name="Vandenbol M."/>
            <person name="van der Aart Q.J.M."/>
            <person name="Van Dyck L."/>
            <person name="Vanoni M."/>
            <person name="Verhasselt P."/>
            <person name="Voet M."/>
            <person name="Volckaert G."/>
            <person name="Wambutt R."/>
            <person name="Watson M.D."/>
            <person name="Weber N."/>
            <person name="Wedler E."/>
            <person name="Wedler H."/>
            <person name="Wipfli P."/>
            <person name="Wolf K."/>
            <person name="Wright L.F."/>
            <person name="Zaccaria P."/>
            <person name="Zimmermann M."/>
            <person name="Zollner A."/>
            <person name="Kleine K."/>
        </authorList>
    </citation>
    <scope>NUCLEOTIDE SEQUENCE [LARGE SCALE GENOMIC DNA]</scope>
    <source>
        <strain>ATCC 204508 / S288c</strain>
    </source>
</reference>
<reference key="2">
    <citation type="journal article" date="2014" name="G3 (Bethesda)">
        <title>The reference genome sequence of Saccharomyces cerevisiae: Then and now.</title>
        <authorList>
            <person name="Engel S.R."/>
            <person name="Dietrich F.S."/>
            <person name="Fisk D.G."/>
            <person name="Binkley G."/>
            <person name="Balakrishnan R."/>
            <person name="Costanzo M.C."/>
            <person name="Dwight S.S."/>
            <person name="Hitz B.C."/>
            <person name="Karra K."/>
            <person name="Nash R.S."/>
            <person name="Weng S."/>
            <person name="Wong E.D."/>
            <person name="Lloyd P."/>
            <person name="Skrzypek M.S."/>
            <person name="Miyasato S.R."/>
            <person name="Simison M."/>
            <person name="Cherry J.M."/>
        </authorList>
    </citation>
    <scope>GENOME REANNOTATION</scope>
    <source>
        <strain>ATCC 204508 / S288c</strain>
    </source>
</reference>
<reference key="3">
    <citation type="journal article" date="2002" name="Mol. Cell">
        <title>The Galpha protein Gpa2 controls yeast differentiation by interacting with kelch repeat proteins that mimic Gbeta subunits.</title>
        <authorList>
            <person name="Harashima T."/>
            <person name="Heitman J."/>
        </authorList>
    </citation>
    <scope>FUNCTION</scope>
    <scope>INTERACTION WITH GPA2; GPB1 AND GPB2</scope>
</reference>
<reference key="4">
    <citation type="journal article" date="2003" name="J. Biochem.">
        <title>Response of genes associated with mitochondrial function to mild heat stress in yeast Saccharomyces cerevisiae.</title>
        <authorList>
            <person name="Sakaki K."/>
            <person name="Tashiro K."/>
            <person name="Kuhara S."/>
            <person name="Mihara K."/>
        </authorList>
    </citation>
    <scope>INDUCTION</scope>
</reference>
<organism>
    <name type="scientific">Saccharomyces cerevisiae (strain ATCC 204508 / S288c)</name>
    <name type="common">Baker's yeast</name>
    <dbReference type="NCBI Taxonomy" id="559292"/>
    <lineage>
        <taxon>Eukaryota</taxon>
        <taxon>Fungi</taxon>
        <taxon>Dikarya</taxon>
        <taxon>Ascomycota</taxon>
        <taxon>Saccharomycotina</taxon>
        <taxon>Saccharomycetes</taxon>
        <taxon>Saccharomycetales</taxon>
        <taxon>Saccharomycetaceae</taxon>
        <taxon>Saccharomyces</taxon>
    </lineage>
</organism>
<accession>P53130</accession>
<accession>D6VU27</accession>
<feature type="chain" id="PRO_0000202745" description="Heterotrimeric G protein gamma subunit GPG1">
    <location>
        <begin position="1"/>
        <end position="126"/>
    </location>
</feature>
<proteinExistence type="evidence at protein level"/>